<organism>
    <name type="scientific">Caenorhabditis elegans</name>
    <dbReference type="NCBI Taxonomy" id="6239"/>
    <lineage>
        <taxon>Eukaryota</taxon>
        <taxon>Metazoa</taxon>
        <taxon>Ecdysozoa</taxon>
        <taxon>Nematoda</taxon>
        <taxon>Chromadorea</taxon>
        <taxon>Rhabditida</taxon>
        <taxon>Rhabditina</taxon>
        <taxon>Rhabditomorpha</taxon>
        <taxon>Rhabditoidea</taxon>
        <taxon>Rhabditidae</taxon>
        <taxon>Peloderinae</taxon>
        <taxon>Caenorhabditis</taxon>
    </lineage>
</organism>
<keyword id="KW-0175">Coiled coil</keyword>
<keyword id="KW-0496">Mitochondrion</keyword>
<keyword id="KW-1185">Reference proteome</keyword>
<keyword id="KW-0809">Transit peptide</keyword>
<comment type="function">
    <text evidence="1">Thought to be a regulatory component of the ATP-synthesizing complex in the mitochondria.</text>
</comment>
<comment type="subcellular location">
    <subcellularLocation>
        <location evidence="5">Mitochondrion</location>
    </subcellularLocation>
</comment>
<comment type="PTM">
    <text>Does not seem to include a transit peptide.</text>
</comment>
<comment type="similarity">
    <text evidence="5">Belongs to the ATPase inhibitor family.</text>
</comment>
<sequence length="88" mass="9569">MSGSGSGSGAGHGGGSGGSIREAGGSLGMMGATREEEYFRRQQKDQLDNLKKKLEADMTQSQQEIRDHEKVLEQHQQRLKEIEKGHGT</sequence>
<protein>
    <recommendedName>
        <fullName evidence="5">ATPase inhibitor mai-1, mitochondrial</fullName>
    </recommendedName>
    <alternativeName>
        <fullName evidence="2">ATP synthase F1 subunit epsilon</fullName>
    </alternativeName>
</protein>
<feature type="transit peptide" description="Mitochondrion">
    <location>
        <begin position="1"/>
        <end status="unknown"/>
    </location>
</feature>
<feature type="chain" id="PRO_0000193521" description="ATPase inhibitor mai-1, mitochondrial">
    <location>
        <begin status="unknown"/>
        <end position="88"/>
    </location>
</feature>
<feature type="region of interest" description="Disordered" evidence="4">
    <location>
        <begin position="1"/>
        <end position="41"/>
    </location>
</feature>
<feature type="coiled-coil region" evidence="3">
    <location>
        <begin position="39"/>
        <end position="87"/>
    </location>
</feature>
<feature type="compositionally biased region" description="Gly residues" evidence="4">
    <location>
        <begin position="1"/>
        <end position="18"/>
    </location>
</feature>
<proteinExistence type="inferred from homology"/>
<dbReference type="EMBL" id="L12348">
    <property type="protein sequence ID" value="AAA28107.1"/>
    <property type="molecule type" value="mRNA"/>
</dbReference>
<dbReference type="EMBL" id="FO080552">
    <property type="protein sequence ID" value="CCD64601.1"/>
    <property type="molecule type" value="Genomic_DNA"/>
</dbReference>
<dbReference type="PIR" id="T16612">
    <property type="entry name" value="T16612"/>
</dbReference>
<dbReference type="RefSeq" id="NP_508536.1">
    <property type="nucleotide sequence ID" value="NM_076135.8"/>
</dbReference>
<dbReference type="SMR" id="P37209"/>
<dbReference type="BioGRID" id="532550">
    <property type="interactions" value="1"/>
</dbReference>
<dbReference type="FunCoup" id="P37209">
    <property type="interactions" value="34"/>
</dbReference>
<dbReference type="STRING" id="6239.K10B3.9.2"/>
<dbReference type="PaxDb" id="6239-K10B3.9.1"/>
<dbReference type="PeptideAtlas" id="P37209"/>
<dbReference type="EnsemblMetazoa" id="K10B3.9.1">
    <property type="protein sequence ID" value="K10B3.9.1"/>
    <property type="gene ID" value="WBGene00003124"/>
</dbReference>
<dbReference type="EnsemblMetazoa" id="K10B3.9.2">
    <property type="protein sequence ID" value="K10B3.9.2"/>
    <property type="gene ID" value="WBGene00003124"/>
</dbReference>
<dbReference type="GeneID" id="3565232"/>
<dbReference type="KEGG" id="cel:CELE_K10B3.9"/>
<dbReference type="UCSC" id="K10B3.9.2">
    <property type="organism name" value="c. elegans"/>
</dbReference>
<dbReference type="AGR" id="WB:WBGene00003124"/>
<dbReference type="CTD" id="3565232"/>
<dbReference type="WormBase" id="K10B3.9">
    <property type="protein sequence ID" value="CE07372"/>
    <property type="gene ID" value="WBGene00003124"/>
    <property type="gene designation" value="mai-1"/>
</dbReference>
<dbReference type="eggNOG" id="ENOG502TIQM">
    <property type="taxonomic scope" value="Eukaryota"/>
</dbReference>
<dbReference type="HOGENOM" id="CLU_147479_1_1_1"/>
<dbReference type="InParanoid" id="P37209"/>
<dbReference type="OMA" id="AFHEEHI"/>
<dbReference type="OrthoDB" id="10045676at2759"/>
<dbReference type="PRO" id="PR:P37209"/>
<dbReference type="Proteomes" id="UP000001940">
    <property type="component" value="Chromosome X"/>
</dbReference>
<dbReference type="Bgee" id="WBGene00003124">
    <property type="expression patterns" value="Expressed in larva and 4 other cell types or tissues"/>
</dbReference>
<dbReference type="GO" id="GO:0005737">
    <property type="term" value="C:cytoplasm"/>
    <property type="evidence" value="ECO:0000314"/>
    <property type="project" value="WormBase"/>
</dbReference>
<dbReference type="GO" id="GO:0005739">
    <property type="term" value="C:mitochondrion"/>
    <property type="evidence" value="ECO:0007669"/>
    <property type="project" value="UniProtKB-SubCell"/>
</dbReference>
<dbReference type="GO" id="GO:0042030">
    <property type="term" value="F:ATPase inhibitor activity"/>
    <property type="evidence" value="ECO:0000314"/>
    <property type="project" value="WormBase"/>
</dbReference>
<dbReference type="FunFam" id="1.20.5.500:FF:000007">
    <property type="entry name" value="ATPase inhibitor, putative"/>
    <property type="match status" value="1"/>
</dbReference>
<dbReference type="Gene3D" id="1.20.5.500">
    <property type="entry name" value="Single helix bin"/>
    <property type="match status" value="1"/>
</dbReference>
<dbReference type="InterPro" id="IPR007648">
    <property type="entry name" value="ATPase_inhibitor_mt"/>
</dbReference>
<dbReference type="PANTHER" id="PTHR48417">
    <property type="entry name" value="ATP SYNTHASE F1 SUBUNIT EPSILON"/>
    <property type="match status" value="1"/>
</dbReference>
<dbReference type="PANTHER" id="PTHR48417:SF1">
    <property type="entry name" value="ATP SYNTHASE F1 SUBUNIT EPSILON"/>
    <property type="match status" value="1"/>
</dbReference>
<dbReference type="Pfam" id="PF04568">
    <property type="entry name" value="IATP"/>
    <property type="match status" value="1"/>
</dbReference>
<dbReference type="SUPFAM" id="SSF64602">
    <property type="entry name" value="F1 ATPase inhibitor, IF1, C-terminal domain"/>
    <property type="match status" value="1"/>
</dbReference>
<evidence type="ECO:0000250" key="1"/>
<evidence type="ECO:0000250" key="2">
    <source>
        <dbReference type="UniProtKB" id="Q9UII2"/>
    </source>
</evidence>
<evidence type="ECO:0000255" key="3"/>
<evidence type="ECO:0000256" key="4">
    <source>
        <dbReference type="SAM" id="MobiDB-lite"/>
    </source>
</evidence>
<evidence type="ECO:0000305" key="5"/>
<gene>
    <name type="primary">mai-1</name>
    <name type="ORF">K10B3.9</name>
</gene>
<accession>P37209</accession>
<reference key="1">
    <citation type="journal article" date="1993" name="Cell">
        <title>Operons in C. elegans: polycistronic mRNA precursors are processed by trans-splicing of SL2 to downstream coding regions.</title>
        <authorList>
            <person name="Spieth J."/>
            <person name="Brooke G."/>
            <person name="Kuersten S."/>
            <person name="Lea K."/>
            <person name="Blumenthal T."/>
        </authorList>
    </citation>
    <scope>NUCLEOTIDE SEQUENCE [MRNA]</scope>
    <source>
        <strain>Bristol N2</strain>
    </source>
</reference>
<reference key="2">
    <citation type="journal article" date="1998" name="Science">
        <title>Genome sequence of the nematode C. elegans: a platform for investigating biology.</title>
        <authorList>
            <consortium name="The C. elegans sequencing consortium"/>
        </authorList>
    </citation>
    <scope>NUCLEOTIDE SEQUENCE [LARGE SCALE GENOMIC DNA]</scope>
    <source>
        <strain>Bristol N2</strain>
    </source>
</reference>
<name>ATIF1_CAEEL</name>